<evidence type="ECO:0000250" key="1">
    <source>
        <dbReference type="UniProtKB" id="P03901"/>
    </source>
</evidence>
<evidence type="ECO:0000250" key="2">
    <source>
        <dbReference type="UniProtKB" id="P03902"/>
    </source>
</evidence>
<evidence type="ECO:0000255" key="3"/>
<evidence type="ECO:0000305" key="4"/>
<evidence type="ECO:0000312" key="5">
    <source>
        <dbReference type="Proteomes" id="UP000006718"/>
    </source>
</evidence>
<accession>Q6IYH0</accession>
<protein>
    <recommendedName>
        <fullName>NADH-ubiquinone oxidoreductase chain 4L</fullName>
        <ecNumber>7.1.1.2</ecNumber>
    </recommendedName>
    <alternativeName>
        <fullName>NADH dehydrogenase subunit 4L</fullName>
    </alternativeName>
</protein>
<geneLocation type="mitochondrion"/>
<keyword id="KW-0249">Electron transport</keyword>
<keyword id="KW-0472">Membrane</keyword>
<keyword id="KW-0496">Mitochondrion</keyword>
<keyword id="KW-0999">Mitochondrion inner membrane</keyword>
<keyword id="KW-0520">NAD</keyword>
<keyword id="KW-1185">Reference proteome</keyword>
<keyword id="KW-0679">Respiratory chain</keyword>
<keyword id="KW-1278">Translocase</keyword>
<keyword id="KW-0812">Transmembrane</keyword>
<keyword id="KW-1133">Transmembrane helix</keyword>
<keyword id="KW-0813">Transport</keyword>
<keyword id="KW-0830">Ubiquinone</keyword>
<sequence length="98" mass="10787">MTLTYMNIMLAFAISLLGMLTYRSHLVASLLCLEGMMMSLFIMATLIASNTHFPLINIMPIILLVFAACETAVGLALLISISNTYGLDYVHNLNLLQC</sequence>
<feature type="chain" id="PRO_0000275048" description="NADH-ubiquinone oxidoreductase chain 4L">
    <location>
        <begin position="1"/>
        <end position="98"/>
    </location>
</feature>
<feature type="transmembrane region" description="Helical" evidence="3">
    <location>
        <begin position="1"/>
        <end position="21"/>
    </location>
</feature>
<feature type="transmembrane region" description="Helical" evidence="3">
    <location>
        <begin position="27"/>
        <end position="47"/>
    </location>
</feature>
<feature type="transmembrane region" description="Helical" evidence="3">
    <location>
        <begin position="61"/>
        <end position="81"/>
    </location>
</feature>
<comment type="function">
    <text evidence="1">Core subunit of the mitochondrial membrane respiratory chain NADH dehydrogenase (Complex I) which catalyzes electron transfer from NADH through the respiratory chain, using ubiquinone as an electron acceptor. Part of the enzyme membrane arm which is embedded in the lipid bilayer and involved in proton translocation.</text>
</comment>
<comment type="catalytic activity">
    <reaction evidence="1">
        <text>a ubiquinone + NADH + 5 H(+)(in) = a ubiquinol + NAD(+) + 4 H(+)(out)</text>
        <dbReference type="Rhea" id="RHEA:29091"/>
        <dbReference type="Rhea" id="RHEA-COMP:9565"/>
        <dbReference type="Rhea" id="RHEA-COMP:9566"/>
        <dbReference type="ChEBI" id="CHEBI:15378"/>
        <dbReference type="ChEBI" id="CHEBI:16389"/>
        <dbReference type="ChEBI" id="CHEBI:17976"/>
        <dbReference type="ChEBI" id="CHEBI:57540"/>
        <dbReference type="ChEBI" id="CHEBI:57945"/>
        <dbReference type="EC" id="7.1.1.2"/>
    </reaction>
    <physiologicalReaction direction="left-to-right" evidence="1">
        <dbReference type="Rhea" id="RHEA:29092"/>
    </physiologicalReaction>
</comment>
<comment type="subunit">
    <text evidence="2">Core subunit of respiratory chain NADH dehydrogenase (Complex I) which is composed of 45 different subunits.</text>
</comment>
<comment type="subcellular location">
    <subcellularLocation>
        <location evidence="2">Mitochondrion inner membrane</location>
        <topology evidence="3">Multi-pass membrane protein</topology>
    </subcellularLocation>
</comment>
<comment type="similarity">
    <text evidence="4">Belongs to the complex I subunit 4L family.</text>
</comment>
<reference key="1">
    <citation type="journal article" date="2004" name="Aging Cell">
        <title>Molecular analyses of mtDNA deletion mutations in microdissected skeletal muscle fibers from aged rhesus monkeys.</title>
        <authorList>
            <person name="Gokey N.G."/>
            <person name="Cao Z."/>
            <person name="Pak J.W."/>
            <person name="Lee D."/>
            <person name="McKiernan S.H."/>
            <person name="McKenzie D."/>
            <person name="Weindruch R."/>
            <person name="Aiken J.M."/>
        </authorList>
    </citation>
    <scope>NUCLEOTIDE SEQUENCE [LARGE SCALE GENOMIC DNA]</scope>
    <source>
        <strain evidence="5">17573</strain>
    </source>
</reference>
<name>NU4LM_MACMU</name>
<proteinExistence type="inferred from homology"/>
<gene>
    <name type="primary">MT-ND4L</name>
    <name type="synonym">MTND4L</name>
    <name type="synonym">NADH4L</name>
    <name type="synonym">ND4L</name>
</gene>
<organism>
    <name type="scientific">Macaca mulatta</name>
    <name type="common">Rhesus macaque</name>
    <dbReference type="NCBI Taxonomy" id="9544"/>
    <lineage>
        <taxon>Eukaryota</taxon>
        <taxon>Metazoa</taxon>
        <taxon>Chordata</taxon>
        <taxon>Craniata</taxon>
        <taxon>Vertebrata</taxon>
        <taxon>Euteleostomi</taxon>
        <taxon>Mammalia</taxon>
        <taxon>Eutheria</taxon>
        <taxon>Euarchontoglires</taxon>
        <taxon>Primates</taxon>
        <taxon>Haplorrhini</taxon>
        <taxon>Catarrhini</taxon>
        <taxon>Cercopithecidae</taxon>
        <taxon>Cercopithecinae</taxon>
        <taxon>Macaca</taxon>
    </lineage>
</organism>
<dbReference type="EC" id="7.1.1.2"/>
<dbReference type="EMBL" id="AY612638">
    <property type="protein sequence ID" value="AAT11994.1"/>
    <property type="molecule type" value="Genomic_DNA"/>
</dbReference>
<dbReference type="RefSeq" id="YP_026112.1">
    <property type="nucleotide sequence ID" value="NC_005943.1"/>
</dbReference>
<dbReference type="SMR" id="Q6IYH0"/>
<dbReference type="FunCoup" id="Q6IYH0">
    <property type="interactions" value="251"/>
</dbReference>
<dbReference type="PaxDb" id="9544-ENSMMUP00000031376"/>
<dbReference type="Ensembl" id="ENSMMUT00000110395.1">
    <property type="protein sequence ID" value="ENSMMUP00000081251.1"/>
    <property type="gene ID" value="ENSMMUG00000065379.1"/>
</dbReference>
<dbReference type="GeneID" id="2846621"/>
<dbReference type="KEGG" id="mcc:2846621"/>
<dbReference type="CTD" id="4539"/>
<dbReference type="VEuPathDB" id="HostDB:ENSMMUG00000065379"/>
<dbReference type="eggNOG" id="KOG4669">
    <property type="taxonomic scope" value="Eukaryota"/>
</dbReference>
<dbReference type="GeneTree" id="ENSGT00390000004755"/>
<dbReference type="HOGENOM" id="CLU_182394_0_0_1"/>
<dbReference type="InParanoid" id="Q6IYH0"/>
<dbReference type="OMA" id="MYRSHLM"/>
<dbReference type="OrthoDB" id="6146597at2759"/>
<dbReference type="TreeFam" id="TF338190"/>
<dbReference type="Proteomes" id="UP000006718">
    <property type="component" value="Mitochondrion"/>
</dbReference>
<dbReference type="Bgee" id="ENSMMUG00000065379">
    <property type="expression patterns" value="Expressed in fibroblast and 18 other cell types or tissues"/>
</dbReference>
<dbReference type="ExpressionAtlas" id="Q6IYH0">
    <property type="expression patterns" value="differential"/>
</dbReference>
<dbReference type="GO" id="GO:0005743">
    <property type="term" value="C:mitochondrial inner membrane"/>
    <property type="evidence" value="ECO:0000250"/>
    <property type="project" value="UniProtKB"/>
</dbReference>
<dbReference type="GO" id="GO:0045271">
    <property type="term" value="C:respiratory chain complex I"/>
    <property type="evidence" value="ECO:0000250"/>
    <property type="project" value="UniProtKB"/>
</dbReference>
<dbReference type="GO" id="GO:0008137">
    <property type="term" value="F:NADH dehydrogenase (ubiquinone) activity"/>
    <property type="evidence" value="ECO:0000250"/>
    <property type="project" value="UniProtKB"/>
</dbReference>
<dbReference type="GO" id="GO:0042773">
    <property type="term" value="P:ATP synthesis coupled electron transport"/>
    <property type="evidence" value="ECO:0007669"/>
    <property type="project" value="InterPro"/>
</dbReference>
<dbReference type="FunFam" id="1.10.287.3510:FF:000002">
    <property type="entry name" value="NADH-ubiquinone oxidoreductase chain 4L"/>
    <property type="match status" value="1"/>
</dbReference>
<dbReference type="Gene3D" id="1.10.287.3510">
    <property type="match status" value="1"/>
</dbReference>
<dbReference type="InterPro" id="IPR001133">
    <property type="entry name" value="NADH_UbQ_OxRdtase_chain4L/K"/>
</dbReference>
<dbReference type="InterPro" id="IPR039428">
    <property type="entry name" value="NUOK/Mnh_C1-like"/>
</dbReference>
<dbReference type="PANTHER" id="PTHR11434:SF0">
    <property type="entry name" value="NADH-UBIQUINONE OXIDOREDUCTASE CHAIN 4L"/>
    <property type="match status" value="1"/>
</dbReference>
<dbReference type="PANTHER" id="PTHR11434">
    <property type="entry name" value="NADH-UBIQUINONE OXIDOREDUCTASE SUBUNIT ND4L"/>
    <property type="match status" value="1"/>
</dbReference>
<dbReference type="Pfam" id="PF00420">
    <property type="entry name" value="Oxidored_q2"/>
    <property type="match status" value="1"/>
</dbReference>